<organism>
    <name type="scientific">Chlamydia felis (strain Fe/C-56)</name>
    <name type="common">Chlamydophila felis</name>
    <dbReference type="NCBI Taxonomy" id="264202"/>
    <lineage>
        <taxon>Bacteria</taxon>
        <taxon>Pseudomonadati</taxon>
        <taxon>Chlamydiota</taxon>
        <taxon>Chlamydiia</taxon>
        <taxon>Chlamydiales</taxon>
        <taxon>Chlamydiaceae</taxon>
        <taxon>Chlamydia/Chlamydophila group</taxon>
        <taxon>Chlamydia</taxon>
    </lineage>
</organism>
<sequence>MIITIDGPSGTGKSTVAKALAQRLKFNYCNTGAMYRTLAYTHLQEPWNCLSIQELIDNPPFSFSFISEQPLEAFLDGHRLSEELGTQEVANAASRLSQLPEVRSFMHKLQRKYAELGNCVFEGRDMGSKVFPDADVKIFLTASAEVRALRRLKDLPKGSLSQEALHAELVKRDEADSRRIHDPLVIPEGAIVLDSSDLTISQVLEKILALVSPEMP</sequence>
<name>KCY_CHLFF</name>
<comment type="catalytic activity">
    <reaction evidence="1">
        <text>CMP + ATP = CDP + ADP</text>
        <dbReference type="Rhea" id="RHEA:11600"/>
        <dbReference type="ChEBI" id="CHEBI:30616"/>
        <dbReference type="ChEBI" id="CHEBI:58069"/>
        <dbReference type="ChEBI" id="CHEBI:60377"/>
        <dbReference type="ChEBI" id="CHEBI:456216"/>
        <dbReference type="EC" id="2.7.4.25"/>
    </reaction>
</comment>
<comment type="catalytic activity">
    <reaction evidence="1">
        <text>dCMP + ATP = dCDP + ADP</text>
        <dbReference type="Rhea" id="RHEA:25094"/>
        <dbReference type="ChEBI" id="CHEBI:30616"/>
        <dbReference type="ChEBI" id="CHEBI:57566"/>
        <dbReference type="ChEBI" id="CHEBI:58593"/>
        <dbReference type="ChEBI" id="CHEBI:456216"/>
        <dbReference type="EC" id="2.7.4.25"/>
    </reaction>
</comment>
<comment type="subcellular location">
    <subcellularLocation>
        <location evidence="1">Cytoplasm</location>
    </subcellularLocation>
</comment>
<comment type="similarity">
    <text evidence="1">Belongs to the cytidylate kinase family. Type 1 subfamily.</text>
</comment>
<keyword id="KW-0067">ATP-binding</keyword>
<keyword id="KW-0963">Cytoplasm</keyword>
<keyword id="KW-0418">Kinase</keyword>
<keyword id="KW-0547">Nucleotide-binding</keyword>
<keyword id="KW-0808">Transferase</keyword>
<reference key="1">
    <citation type="journal article" date="2006" name="DNA Res.">
        <title>Genome sequence of the cat pathogen, Chlamydophila felis.</title>
        <authorList>
            <person name="Azuma Y."/>
            <person name="Hirakawa H."/>
            <person name="Yamashita A."/>
            <person name="Cai Y."/>
            <person name="Rahman M.A."/>
            <person name="Suzuki H."/>
            <person name="Mitaku S."/>
            <person name="Toh H."/>
            <person name="Goto S."/>
            <person name="Murakami T."/>
            <person name="Sugi K."/>
            <person name="Hayashi H."/>
            <person name="Fukushi H."/>
            <person name="Hattori M."/>
            <person name="Kuhara S."/>
            <person name="Shirai M."/>
        </authorList>
    </citation>
    <scope>NUCLEOTIDE SEQUENCE [LARGE SCALE GENOMIC DNA]</scope>
    <source>
        <strain>Fe/C-56</strain>
    </source>
</reference>
<dbReference type="EC" id="2.7.4.25" evidence="1"/>
<dbReference type="EMBL" id="AP006861">
    <property type="protein sequence ID" value="BAE81605.1"/>
    <property type="molecule type" value="Genomic_DNA"/>
</dbReference>
<dbReference type="RefSeq" id="WP_011458380.1">
    <property type="nucleotide sequence ID" value="NC_007899.1"/>
</dbReference>
<dbReference type="SMR" id="Q253D3"/>
<dbReference type="STRING" id="264202.CF0833"/>
<dbReference type="KEGG" id="cfe:CF0833"/>
<dbReference type="eggNOG" id="COG0283">
    <property type="taxonomic scope" value="Bacteria"/>
</dbReference>
<dbReference type="HOGENOM" id="CLU_079959_0_2_0"/>
<dbReference type="OrthoDB" id="9807434at2"/>
<dbReference type="Proteomes" id="UP000001260">
    <property type="component" value="Chromosome"/>
</dbReference>
<dbReference type="GO" id="GO:0005737">
    <property type="term" value="C:cytoplasm"/>
    <property type="evidence" value="ECO:0007669"/>
    <property type="project" value="UniProtKB-SubCell"/>
</dbReference>
<dbReference type="GO" id="GO:0005524">
    <property type="term" value="F:ATP binding"/>
    <property type="evidence" value="ECO:0007669"/>
    <property type="project" value="UniProtKB-UniRule"/>
</dbReference>
<dbReference type="GO" id="GO:0036430">
    <property type="term" value="F:CMP kinase activity"/>
    <property type="evidence" value="ECO:0007669"/>
    <property type="project" value="RHEA"/>
</dbReference>
<dbReference type="GO" id="GO:0036431">
    <property type="term" value="F:dCMP kinase activity"/>
    <property type="evidence" value="ECO:0007669"/>
    <property type="project" value="RHEA"/>
</dbReference>
<dbReference type="GO" id="GO:0006220">
    <property type="term" value="P:pyrimidine nucleotide metabolic process"/>
    <property type="evidence" value="ECO:0007669"/>
    <property type="project" value="UniProtKB-UniRule"/>
</dbReference>
<dbReference type="CDD" id="cd02020">
    <property type="entry name" value="CMPK"/>
    <property type="match status" value="1"/>
</dbReference>
<dbReference type="Gene3D" id="3.40.50.300">
    <property type="entry name" value="P-loop containing nucleotide triphosphate hydrolases"/>
    <property type="match status" value="1"/>
</dbReference>
<dbReference type="HAMAP" id="MF_00238">
    <property type="entry name" value="Cytidyl_kinase_type1"/>
    <property type="match status" value="1"/>
</dbReference>
<dbReference type="InterPro" id="IPR003136">
    <property type="entry name" value="Cytidylate_kin"/>
</dbReference>
<dbReference type="InterPro" id="IPR011994">
    <property type="entry name" value="Cytidylate_kinase_dom"/>
</dbReference>
<dbReference type="InterPro" id="IPR027417">
    <property type="entry name" value="P-loop_NTPase"/>
</dbReference>
<dbReference type="NCBIfam" id="TIGR00017">
    <property type="entry name" value="cmk"/>
    <property type="match status" value="1"/>
</dbReference>
<dbReference type="Pfam" id="PF02224">
    <property type="entry name" value="Cytidylate_kin"/>
    <property type="match status" value="1"/>
</dbReference>
<dbReference type="SUPFAM" id="SSF52540">
    <property type="entry name" value="P-loop containing nucleoside triphosphate hydrolases"/>
    <property type="match status" value="1"/>
</dbReference>
<evidence type="ECO:0000255" key="1">
    <source>
        <dbReference type="HAMAP-Rule" id="MF_00238"/>
    </source>
</evidence>
<protein>
    <recommendedName>
        <fullName evidence="1">Cytidylate kinase</fullName>
        <shortName evidence="1">CK</shortName>
        <ecNumber evidence="1">2.7.4.25</ecNumber>
    </recommendedName>
    <alternativeName>
        <fullName evidence="1">Cytidine monophosphate kinase</fullName>
        <shortName evidence="1">CMP kinase</shortName>
    </alternativeName>
</protein>
<gene>
    <name evidence="1" type="primary">cmk</name>
    <name type="ordered locus">CF0833</name>
</gene>
<accession>Q253D3</accession>
<feature type="chain" id="PRO_1000048207" description="Cytidylate kinase">
    <location>
        <begin position="1"/>
        <end position="216"/>
    </location>
</feature>
<feature type="binding site" evidence="1">
    <location>
        <begin position="7"/>
        <end position="15"/>
    </location>
    <ligand>
        <name>ATP</name>
        <dbReference type="ChEBI" id="CHEBI:30616"/>
    </ligand>
</feature>
<proteinExistence type="inferred from homology"/>